<feature type="chain" id="PRO_0000109628" description="Glutamate 5-kinase">
    <location>
        <begin position="1"/>
        <end position="389"/>
    </location>
</feature>
<feature type="domain" description="PUA" evidence="1">
    <location>
        <begin position="282"/>
        <end position="359"/>
    </location>
</feature>
<feature type="binding site" evidence="1">
    <location>
        <position position="17"/>
    </location>
    <ligand>
        <name>ATP</name>
        <dbReference type="ChEBI" id="CHEBI:30616"/>
    </ligand>
</feature>
<feature type="binding site" evidence="1">
    <location>
        <position position="57"/>
    </location>
    <ligand>
        <name>substrate</name>
    </ligand>
</feature>
<feature type="binding site" evidence="1">
    <location>
        <position position="144"/>
    </location>
    <ligand>
        <name>substrate</name>
    </ligand>
</feature>
<feature type="binding site" evidence="1">
    <location>
        <position position="156"/>
    </location>
    <ligand>
        <name>substrate</name>
    </ligand>
</feature>
<feature type="binding site" evidence="1">
    <location>
        <begin position="176"/>
        <end position="177"/>
    </location>
    <ligand>
        <name>ATP</name>
        <dbReference type="ChEBI" id="CHEBI:30616"/>
    </ligand>
</feature>
<proteinExistence type="inferred from homology"/>
<keyword id="KW-0028">Amino-acid biosynthesis</keyword>
<keyword id="KW-0067">ATP-binding</keyword>
<keyword id="KW-0963">Cytoplasm</keyword>
<keyword id="KW-0418">Kinase</keyword>
<keyword id="KW-0547">Nucleotide-binding</keyword>
<keyword id="KW-0641">Proline biosynthesis</keyword>
<keyword id="KW-1185">Reference proteome</keyword>
<keyword id="KW-0808">Transferase</keyword>
<dbReference type="EC" id="2.7.2.11" evidence="1"/>
<dbReference type="EMBL" id="AE007869">
    <property type="protein sequence ID" value="AAK88495.1"/>
    <property type="molecule type" value="Genomic_DNA"/>
</dbReference>
<dbReference type="PIR" id="AC2918">
    <property type="entry name" value="AC2918"/>
</dbReference>
<dbReference type="PIR" id="F97692">
    <property type="entry name" value="F97692"/>
</dbReference>
<dbReference type="RefSeq" id="NP_355710.1">
    <property type="nucleotide sequence ID" value="NC_003062.2"/>
</dbReference>
<dbReference type="RefSeq" id="WP_010972562.1">
    <property type="nucleotide sequence ID" value="NC_003062.2"/>
</dbReference>
<dbReference type="SMR" id="Q8UBS0"/>
<dbReference type="STRING" id="176299.Atu2780"/>
<dbReference type="EnsemblBacteria" id="AAK88495">
    <property type="protein sequence ID" value="AAK88495"/>
    <property type="gene ID" value="Atu2780"/>
</dbReference>
<dbReference type="GeneID" id="1134818"/>
<dbReference type="KEGG" id="atu:Atu2780"/>
<dbReference type="PATRIC" id="fig|176299.10.peg.2790"/>
<dbReference type="eggNOG" id="COG0263">
    <property type="taxonomic scope" value="Bacteria"/>
</dbReference>
<dbReference type="HOGENOM" id="CLU_025400_2_0_5"/>
<dbReference type="OrthoDB" id="9804434at2"/>
<dbReference type="PhylomeDB" id="Q8UBS0"/>
<dbReference type="BioCyc" id="AGRO:ATU2780-MONOMER"/>
<dbReference type="UniPathway" id="UPA00098">
    <property type="reaction ID" value="UER00359"/>
</dbReference>
<dbReference type="Proteomes" id="UP000000813">
    <property type="component" value="Chromosome circular"/>
</dbReference>
<dbReference type="GO" id="GO:0005829">
    <property type="term" value="C:cytosol"/>
    <property type="evidence" value="ECO:0007669"/>
    <property type="project" value="TreeGrafter"/>
</dbReference>
<dbReference type="GO" id="GO:0005524">
    <property type="term" value="F:ATP binding"/>
    <property type="evidence" value="ECO:0007669"/>
    <property type="project" value="UniProtKB-KW"/>
</dbReference>
<dbReference type="GO" id="GO:0004349">
    <property type="term" value="F:glutamate 5-kinase activity"/>
    <property type="evidence" value="ECO:0007669"/>
    <property type="project" value="UniProtKB-UniRule"/>
</dbReference>
<dbReference type="GO" id="GO:0003723">
    <property type="term" value="F:RNA binding"/>
    <property type="evidence" value="ECO:0007669"/>
    <property type="project" value="InterPro"/>
</dbReference>
<dbReference type="GO" id="GO:0055129">
    <property type="term" value="P:L-proline biosynthetic process"/>
    <property type="evidence" value="ECO:0007669"/>
    <property type="project" value="UniProtKB-UniRule"/>
</dbReference>
<dbReference type="CDD" id="cd04242">
    <property type="entry name" value="AAK_G5K_ProB"/>
    <property type="match status" value="1"/>
</dbReference>
<dbReference type="CDD" id="cd21157">
    <property type="entry name" value="PUA_G5K"/>
    <property type="match status" value="1"/>
</dbReference>
<dbReference type="FunFam" id="2.30.130.10:FF:000007">
    <property type="entry name" value="Glutamate 5-kinase"/>
    <property type="match status" value="1"/>
</dbReference>
<dbReference type="FunFam" id="3.40.1160.10:FF:000018">
    <property type="entry name" value="Glutamate 5-kinase"/>
    <property type="match status" value="1"/>
</dbReference>
<dbReference type="Gene3D" id="3.40.1160.10">
    <property type="entry name" value="Acetylglutamate kinase-like"/>
    <property type="match status" value="1"/>
</dbReference>
<dbReference type="Gene3D" id="2.30.130.10">
    <property type="entry name" value="PUA domain"/>
    <property type="match status" value="1"/>
</dbReference>
<dbReference type="HAMAP" id="MF_00456">
    <property type="entry name" value="ProB"/>
    <property type="match status" value="1"/>
</dbReference>
<dbReference type="InterPro" id="IPR036393">
    <property type="entry name" value="AceGlu_kinase-like_sf"/>
</dbReference>
<dbReference type="InterPro" id="IPR001048">
    <property type="entry name" value="Asp/Glu/Uridylate_kinase"/>
</dbReference>
<dbReference type="InterPro" id="IPR041739">
    <property type="entry name" value="G5K_ProB"/>
</dbReference>
<dbReference type="InterPro" id="IPR001057">
    <property type="entry name" value="Glu/AcGlu_kinase"/>
</dbReference>
<dbReference type="InterPro" id="IPR011529">
    <property type="entry name" value="Glu_5kinase"/>
</dbReference>
<dbReference type="InterPro" id="IPR005715">
    <property type="entry name" value="Glu_5kinase/COase_Synthase"/>
</dbReference>
<dbReference type="InterPro" id="IPR019797">
    <property type="entry name" value="Glutamate_5-kinase_CS"/>
</dbReference>
<dbReference type="InterPro" id="IPR002478">
    <property type="entry name" value="PUA"/>
</dbReference>
<dbReference type="InterPro" id="IPR015947">
    <property type="entry name" value="PUA-like_sf"/>
</dbReference>
<dbReference type="InterPro" id="IPR036974">
    <property type="entry name" value="PUA_sf"/>
</dbReference>
<dbReference type="NCBIfam" id="TIGR01027">
    <property type="entry name" value="proB"/>
    <property type="match status" value="1"/>
</dbReference>
<dbReference type="PANTHER" id="PTHR43654">
    <property type="entry name" value="GLUTAMATE 5-KINASE"/>
    <property type="match status" value="1"/>
</dbReference>
<dbReference type="PANTHER" id="PTHR43654:SF1">
    <property type="entry name" value="ISOPENTENYL PHOSPHATE KINASE"/>
    <property type="match status" value="1"/>
</dbReference>
<dbReference type="Pfam" id="PF00696">
    <property type="entry name" value="AA_kinase"/>
    <property type="match status" value="1"/>
</dbReference>
<dbReference type="Pfam" id="PF01472">
    <property type="entry name" value="PUA"/>
    <property type="match status" value="1"/>
</dbReference>
<dbReference type="PIRSF" id="PIRSF000729">
    <property type="entry name" value="GK"/>
    <property type="match status" value="1"/>
</dbReference>
<dbReference type="PRINTS" id="PR00474">
    <property type="entry name" value="GLU5KINASE"/>
</dbReference>
<dbReference type="SMART" id="SM00359">
    <property type="entry name" value="PUA"/>
    <property type="match status" value="1"/>
</dbReference>
<dbReference type="SUPFAM" id="SSF53633">
    <property type="entry name" value="Carbamate kinase-like"/>
    <property type="match status" value="1"/>
</dbReference>
<dbReference type="SUPFAM" id="SSF88697">
    <property type="entry name" value="PUA domain-like"/>
    <property type="match status" value="1"/>
</dbReference>
<dbReference type="PROSITE" id="PS00902">
    <property type="entry name" value="GLUTAMATE_5_KINASE"/>
    <property type="match status" value="1"/>
</dbReference>
<dbReference type="PROSITE" id="PS50890">
    <property type="entry name" value="PUA"/>
    <property type="match status" value="1"/>
</dbReference>
<protein>
    <recommendedName>
        <fullName evidence="1">Glutamate 5-kinase</fullName>
        <ecNumber evidence="1">2.7.2.11</ecNumber>
    </recommendedName>
    <alternativeName>
        <fullName evidence="1">Gamma-glutamyl kinase</fullName>
        <shortName evidence="1">GK</shortName>
    </alternativeName>
</protein>
<accession>Q8UBS0</accession>
<reference key="1">
    <citation type="journal article" date="2001" name="Science">
        <title>The genome of the natural genetic engineer Agrobacterium tumefaciens C58.</title>
        <authorList>
            <person name="Wood D.W."/>
            <person name="Setubal J.C."/>
            <person name="Kaul R."/>
            <person name="Monks D.E."/>
            <person name="Kitajima J.P."/>
            <person name="Okura V.K."/>
            <person name="Zhou Y."/>
            <person name="Chen L."/>
            <person name="Wood G.E."/>
            <person name="Almeida N.F. Jr."/>
            <person name="Woo L."/>
            <person name="Chen Y."/>
            <person name="Paulsen I.T."/>
            <person name="Eisen J.A."/>
            <person name="Karp P.D."/>
            <person name="Bovee D. Sr."/>
            <person name="Chapman P."/>
            <person name="Clendenning J."/>
            <person name="Deatherage G."/>
            <person name="Gillet W."/>
            <person name="Grant C."/>
            <person name="Kutyavin T."/>
            <person name="Levy R."/>
            <person name="Li M.-J."/>
            <person name="McClelland E."/>
            <person name="Palmieri A."/>
            <person name="Raymond C."/>
            <person name="Rouse G."/>
            <person name="Saenphimmachak C."/>
            <person name="Wu Z."/>
            <person name="Romero P."/>
            <person name="Gordon D."/>
            <person name="Zhang S."/>
            <person name="Yoo H."/>
            <person name="Tao Y."/>
            <person name="Biddle P."/>
            <person name="Jung M."/>
            <person name="Krespan W."/>
            <person name="Perry M."/>
            <person name="Gordon-Kamm B."/>
            <person name="Liao L."/>
            <person name="Kim S."/>
            <person name="Hendrick C."/>
            <person name="Zhao Z.-Y."/>
            <person name="Dolan M."/>
            <person name="Chumley F."/>
            <person name="Tingey S.V."/>
            <person name="Tomb J.-F."/>
            <person name="Gordon M.P."/>
            <person name="Olson M.V."/>
            <person name="Nester E.W."/>
        </authorList>
    </citation>
    <scope>NUCLEOTIDE SEQUENCE [LARGE SCALE GENOMIC DNA]</scope>
    <source>
        <strain>C58 / ATCC 33970</strain>
    </source>
</reference>
<reference key="2">
    <citation type="journal article" date="2001" name="Science">
        <title>Genome sequence of the plant pathogen and biotechnology agent Agrobacterium tumefaciens C58.</title>
        <authorList>
            <person name="Goodner B."/>
            <person name="Hinkle G."/>
            <person name="Gattung S."/>
            <person name="Miller N."/>
            <person name="Blanchard M."/>
            <person name="Qurollo B."/>
            <person name="Goldman B.S."/>
            <person name="Cao Y."/>
            <person name="Askenazi M."/>
            <person name="Halling C."/>
            <person name="Mullin L."/>
            <person name="Houmiel K."/>
            <person name="Gordon J."/>
            <person name="Vaudin M."/>
            <person name="Iartchouk O."/>
            <person name="Epp A."/>
            <person name="Liu F."/>
            <person name="Wollam C."/>
            <person name="Allinger M."/>
            <person name="Doughty D."/>
            <person name="Scott C."/>
            <person name="Lappas C."/>
            <person name="Markelz B."/>
            <person name="Flanagan C."/>
            <person name="Crowell C."/>
            <person name="Gurson J."/>
            <person name="Lomo C."/>
            <person name="Sear C."/>
            <person name="Strub G."/>
            <person name="Cielo C."/>
            <person name="Slater S."/>
        </authorList>
    </citation>
    <scope>NUCLEOTIDE SEQUENCE [LARGE SCALE GENOMIC DNA]</scope>
    <source>
        <strain>C58 / ATCC 33970</strain>
    </source>
</reference>
<sequence length="389" mass="40955">MSLTRKPLASHHRIVIKIGSALLVDRKSGLKKDWLDAICEDIAALKKNGADVQVVSSGAIALGRTVLGLPSGALKLEESQAAAAVGQIALARAWSESLSRHEIVAGQILLTLSDTEERRRYLNARATINQLLKIGAIPIINENDTVATTEIRYGDNDRLAARVATMTGADLLVLLSDIDGLYTAPPHLDPDAKFLETIADITPEIEAMAGGAASELSRGGMRTKIDAGKIATAAGCGMIIASGKTLNPLKAIENGARSSWFAPSGTPVTARKTWIAGQLQPAGEIHVDAGAEKALYAGKSLLPAGVRQVKGNFGRGDAIAIIGVEGREVARGLAGYDAEEARLIIGHKSNEIETILGYVGRAAMIHRDDLVMTGAAVKVKHAKKDEVHA</sequence>
<evidence type="ECO:0000255" key="1">
    <source>
        <dbReference type="HAMAP-Rule" id="MF_00456"/>
    </source>
</evidence>
<organism>
    <name type="scientific">Agrobacterium fabrum (strain C58 / ATCC 33970)</name>
    <name type="common">Agrobacterium tumefaciens (strain C58)</name>
    <dbReference type="NCBI Taxonomy" id="176299"/>
    <lineage>
        <taxon>Bacteria</taxon>
        <taxon>Pseudomonadati</taxon>
        <taxon>Pseudomonadota</taxon>
        <taxon>Alphaproteobacteria</taxon>
        <taxon>Hyphomicrobiales</taxon>
        <taxon>Rhizobiaceae</taxon>
        <taxon>Rhizobium/Agrobacterium group</taxon>
        <taxon>Agrobacterium</taxon>
        <taxon>Agrobacterium tumefaciens complex</taxon>
    </lineage>
</organism>
<name>PROB_AGRFC</name>
<gene>
    <name evidence="1" type="primary">proB</name>
    <name type="ordered locus">Atu2780</name>
    <name type="ORF">AGR_C_5045</name>
</gene>
<comment type="function">
    <text evidence="1">Catalyzes the transfer of a phosphate group to glutamate to form L-glutamate 5-phosphate.</text>
</comment>
<comment type="catalytic activity">
    <reaction evidence="1">
        <text>L-glutamate + ATP = L-glutamyl 5-phosphate + ADP</text>
        <dbReference type="Rhea" id="RHEA:14877"/>
        <dbReference type="ChEBI" id="CHEBI:29985"/>
        <dbReference type="ChEBI" id="CHEBI:30616"/>
        <dbReference type="ChEBI" id="CHEBI:58274"/>
        <dbReference type="ChEBI" id="CHEBI:456216"/>
        <dbReference type="EC" id="2.7.2.11"/>
    </reaction>
</comment>
<comment type="pathway">
    <text evidence="1">Amino-acid biosynthesis; L-proline biosynthesis; L-glutamate 5-semialdehyde from L-glutamate: step 1/2.</text>
</comment>
<comment type="subcellular location">
    <subcellularLocation>
        <location evidence="1">Cytoplasm</location>
    </subcellularLocation>
</comment>
<comment type="similarity">
    <text evidence="1">Belongs to the glutamate 5-kinase family.</text>
</comment>